<accession>P0DE97</accession>
<accession>P66600</accession>
<accession>Q99Y79</accession>
<gene>
    <name evidence="1" type="primary">rpsF</name>
    <name type="ordered locus">SPs0285</name>
</gene>
<evidence type="ECO:0000255" key="1">
    <source>
        <dbReference type="HAMAP-Rule" id="MF_00360"/>
    </source>
</evidence>
<evidence type="ECO:0000305" key="2"/>
<organism>
    <name type="scientific">Streptococcus pyogenes serotype M3 (strain SSI-1)</name>
    <dbReference type="NCBI Taxonomy" id="193567"/>
    <lineage>
        <taxon>Bacteria</taxon>
        <taxon>Bacillati</taxon>
        <taxon>Bacillota</taxon>
        <taxon>Bacilli</taxon>
        <taxon>Lactobacillales</taxon>
        <taxon>Streptococcaceae</taxon>
        <taxon>Streptococcus</taxon>
    </lineage>
</organism>
<comment type="function">
    <text evidence="1">Binds together with bS18 to 16S ribosomal RNA.</text>
</comment>
<comment type="similarity">
    <text evidence="1">Belongs to the bacterial ribosomal protein bS6 family.</text>
</comment>
<sequence length="96" mass="11082">MAKYEILYIIRPNIEEEAKNALVARFDSILTDNGATVVESKDWEKRRLAYEINDFREGLYHIVNLEATDAAALNEFDRLSKINGDILRHMIVKLDA</sequence>
<name>RS6_STRPQ</name>
<dbReference type="EMBL" id="BA000034">
    <property type="protein sequence ID" value="BAC63380.1"/>
    <property type="molecule type" value="Genomic_DNA"/>
</dbReference>
<dbReference type="RefSeq" id="WP_002983117.1">
    <property type="nucleotide sequence ID" value="NC_004606.1"/>
</dbReference>
<dbReference type="SMR" id="P0DE97"/>
<dbReference type="GeneID" id="83689976"/>
<dbReference type="KEGG" id="sps:SPs0285"/>
<dbReference type="HOGENOM" id="CLU_113441_5_3_9"/>
<dbReference type="GO" id="GO:0005737">
    <property type="term" value="C:cytoplasm"/>
    <property type="evidence" value="ECO:0007669"/>
    <property type="project" value="UniProtKB-ARBA"/>
</dbReference>
<dbReference type="GO" id="GO:1990904">
    <property type="term" value="C:ribonucleoprotein complex"/>
    <property type="evidence" value="ECO:0007669"/>
    <property type="project" value="UniProtKB-KW"/>
</dbReference>
<dbReference type="GO" id="GO:0005840">
    <property type="term" value="C:ribosome"/>
    <property type="evidence" value="ECO:0007669"/>
    <property type="project" value="UniProtKB-KW"/>
</dbReference>
<dbReference type="GO" id="GO:0070181">
    <property type="term" value="F:small ribosomal subunit rRNA binding"/>
    <property type="evidence" value="ECO:0007669"/>
    <property type="project" value="TreeGrafter"/>
</dbReference>
<dbReference type="GO" id="GO:0003735">
    <property type="term" value="F:structural constituent of ribosome"/>
    <property type="evidence" value="ECO:0007669"/>
    <property type="project" value="InterPro"/>
</dbReference>
<dbReference type="GO" id="GO:0006412">
    <property type="term" value="P:translation"/>
    <property type="evidence" value="ECO:0007669"/>
    <property type="project" value="UniProtKB-UniRule"/>
</dbReference>
<dbReference type="CDD" id="cd00473">
    <property type="entry name" value="bS6"/>
    <property type="match status" value="1"/>
</dbReference>
<dbReference type="FunFam" id="3.30.70.60:FF:000002">
    <property type="entry name" value="30S ribosomal protein S6"/>
    <property type="match status" value="1"/>
</dbReference>
<dbReference type="Gene3D" id="3.30.70.60">
    <property type="match status" value="1"/>
</dbReference>
<dbReference type="HAMAP" id="MF_00360">
    <property type="entry name" value="Ribosomal_bS6"/>
    <property type="match status" value="1"/>
</dbReference>
<dbReference type="InterPro" id="IPR000529">
    <property type="entry name" value="Ribosomal_bS6"/>
</dbReference>
<dbReference type="InterPro" id="IPR035980">
    <property type="entry name" value="Ribosomal_bS6_sf"/>
</dbReference>
<dbReference type="InterPro" id="IPR020814">
    <property type="entry name" value="Ribosomal_S6_plastid/chlpt"/>
</dbReference>
<dbReference type="InterPro" id="IPR014717">
    <property type="entry name" value="Transl_elong_EF1B/ribsomal_bS6"/>
</dbReference>
<dbReference type="NCBIfam" id="TIGR00166">
    <property type="entry name" value="S6"/>
    <property type="match status" value="1"/>
</dbReference>
<dbReference type="PANTHER" id="PTHR21011">
    <property type="entry name" value="MITOCHONDRIAL 28S RIBOSOMAL PROTEIN S6"/>
    <property type="match status" value="1"/>
</dbReference>
<dbReference type="PANTHER" id="PTHR21011:SF1">
    <property type="entry name" value="SMALL RIBOSOMAL SUBUNIT PROTEIN BS6M"/>
    <property type="match status" value="1"/>
</dbReference>
<dbReference type="Pfam" id="PF01250">
    <property type="entry name" value="Ribosomal_S6"/>
    <property type="match status" value="1"/>
</dbReference>
<dbReference type="SUPFAM" id="SSF54995">
    <property type="entry name" value="Ribosomal protein S6"/>
    <property type="match status" value="1"/>
</dbReference>
<keyword id="KW-0687">Ribonucleoprotein</keyword>
<keyword id="KW-0689">Ribosomal protein</keyword>
<keyword id="KW-0694">RNA-binding</keyword>
<keyword id="KW-0699">rRNA-binding</keyword>
<feature type="chain" id="PRO_0000411538" description="Small ribosomal subunit protein bS6">
    <location>
        <begin position="1"/>
        <end position="96"/>
    </location>
</feature>
<proteinExistence type="inferred from homology"/>
<reference key="1">
    <citation type="journal article" date="2003" name="Genome Res.">
        <title>Genome sequence of an M3 strain of Streptococcus pyogenes reveals a large-scale genomic rearrangement in invasive strains and new insights into phage evolution.</title>
        <authorList>
            <person name="Nakagawa I."/>
            <person name="Kurokawa K."/>
            <person name="Yamashita A."/>
            <person name="Nakata M."/>
            <person name="Tomiyasu Y."/>
            <person name="Okahashi N."/>
            <person name="Kawabata S."/>
            <person name="Yamazaki K."/>
            <person name="Shiba T."/>
            <person name="Yasunaga T."/>
            <person name="Hayashi H."/>
            <person name="Hattori M."/>
            <person name="Hamada S."/>
        </authorList>
    </citation>
    <scope>NUCLEOTIDE SEQUENCE [LARGE SCALE GENOMIC DNA]</scope>
    <source>
        <strain>SSI-1</strain>
    </source>
</reference>
<protein>
    <recommendedName>
        <fullName evidence="1">Small ribosomal subunit protein bS6</fullName>
    </recommendedName>
    <alternativeName>
        <fullName evidence="2">30S ribosomal protein S6</fullName>
    </alternativeName>
</protein>